<accession>P31956</accession>
<gene>
    <name type="primary">pac</name>
    <name type="synonym">pa</name>
</gene>
<keyword id="KW-0046">Antibiotic resistance</keyword>
<keyword id="KW-0106">Calcium</keyword>
<keyword id="KW-0903">Direct protein sequencing</keyword>
<keyword id="KW-0378">Hydrolase</keyword>
<keyword id="KW-0479">Metal-binding</keyword>
<keyword id="KW-0964">Secreted</keyword>
<keyword id="KW-0732">Signal</keyword>
<keyword id="KW-0865">Zymogen</keyword>
<organism>
    <name type="scientific">Rhizobium viscosum</name>
    <name type="common">Arthrobacter viscosus</name>
    <dbReference type="NCBI Taxonomy" id="1673"/>
    <lineage>
        <taxon>Bacteria</taxon>
        <taxon>Pseudomonadati</taxon>
        <taxon>Pseudomonadota</taxon>
        <taxon>Alphaproteobacteria</taxon>
        <taxon>Hyphomicrobiales</taxon>
        <taxon>Rhizobiaceae</taxon>
        <taxon>Rhizobium/Agrobacterium group</taxon>
        <taxon>Rhizobium</taxon>
    </lineage>
</organism>
<proteinExistence type="evidence at protein level"/>
<comment type="catalytic activity">
    <reaction>
        <text>a penicillin + H2O = 6-aminopenicillanate + a carboxylate</text>
        <dbReference type="Rhea" id="RHEA:18693"/>
        <dbReference type="ChEBI" id="CHEBI:15377"/>
        <dbReference type="ChEBI" id="CHEBI:29067"/>
        <dbReference type="ChEBI" id="CHEBI:51356"/>
        <dbReference type="ChEBI" id="CHEBI:57869"/>
        <dbReference type="EC" id="3.5.1.11"/>
    </reaction>
</comment>
<comment type="cofactor">
    <cofactor evidence="4">
        <name>Ca(2+)</name>
        <dbReference type="ChEBI" id="CHEBI:29108"/>
    </cofactor>
    <text evidence="4">Binds 1 Ca(2+) ion per subunit.</text>
</comment>
<comment type="subunit">
    <text evidence="1">Heterodimer of an alpha subunit and a beta subunit processed from the same precursor.</text>
</comment>
<comment type="subcellular location">
    <subcellularLocation>
        <location evidence="4">Secreted</location>
    </subcellularLocation>
</comment>
<comment type="similarity">
    <text evidence="4">Belongs to the peptidase S45 family.</text>
</comment>
<sequence>MKMKWLISVIILFVFIFPQNLVFAGEDKNEGVKVVRDNFGVPHLYAKNKKDLYEAYGYVMAKDRLFQLEMFRRGNEGTVSEIFGEDYLSKDEQSRRDGYSNKEIKKMIDGLDRQPRELIAKFAEGISRYVNEALKDPDDKLSKEFHEYQFLPQKWTSTDVVRVYMVSMTYLWIITRELKNAEILAKLEHEYGTEVSRKMFDDLVWKNDPSAPTSIVSEGKPKRESSSQSLQKLSSAVIKASEKVGKERENFVQSSEELGLPLKIGSNAAIVGSEKSATGNALLFSGPQVGFVAPGFLYEVGLHAPGFDMEGSGFIGYPFIMFGANNHFALSATAGYGNVTDIFEEKLNTKNSSQYLYKGKWRDMEKRKESFTVKGDNGEKKTVEKIYYRTVHGPVISRDETNKVAYSKYVSFRGTEAQSMSAYMKANWAKNLKEFENAASEYTMSLNWYYADKKGDIAYYHVGRYPVRNNKIDERIPTPGTGEYEWKGFIPFKENPHVINPKNGYVVNWNNKPSKEWVNGEYSYYWGEDNRVQQYINGMEARGKVTLEDINEINYTASFAQLRANLFKPLLIDVLDKNKSTNGNYTYLIEKLEEWNNLKEDENKDGYYDAGIAAFFDEWWNNLHDKLFMDELGDFYGITKEITDHRYGASLAYKNISKESTNYKWVNVDQEKIIMESTNEVLAKLQSEKGLKAEKWRMPIKTMTFGEKSLIGIPHGYGSMTPIIEMNRGSENHYIEMTPKGPSGFNITPPGQIGFVKKDGTISDHYDDQLVMFAEWKFKPYLFNKKDIYKAATNVSALNMSK</sequence>
<feature type="signal peptide" evidence="3">
    <location>
        <begin position="1"/>
        <end position="26"/>
    </location>
</feature>
<feature type="chain" id="PRO_0000027337" description="Penicillin G acylase">
    <location>
        <begin position="27"/>
        <end position="802"/>
    </location>
</feature>
<feature type="chain" id="PRO_0000027338" description="Penicillin G acylase subunit alpha">
    <location>
        <begin position="27"/>
        <end position="234"/>
    </location>
</feature>
<feature type="propeptide" id="PRO_0000027339" description="Spacer peptide" evidence="3">
    <location>
        <begin position="235"/>
        <end position="265"/>
    </location>
</feature>
<feature type="chain" id="PRO_0000027340" description="Penicillin G acylase subunit beta">
    <location>
        <begin position="266"/>
        <end position="802"/>
    </location>
</feature>
<feature type="active site" description="Nucleophile" evidence="1">
    <location>
        <position position="266"/>
    </location>
</feature>
<feature type="binding site" evidence="2">
    <location>
        <position position="177"/>
    </location>
    <ligand>
        <name>Ca(2+)</name>
        <dbReference type="ChEBI" id="CHEBI:29108"/>
    </ligand>
</feature>
<feature type="binding site" evidence="2">
    <location>
        <position position="341"/>
    </location>
    <ligand>
        <name>Ca(2+)</name>
        <dbReference type="ChEBI" id="CHEBI:29108"/>
    </ligand>
</feature>
<protein>
    <recommendedName>
        <fullName>Penicillin G acylase</fullName>
        <ecNumber>3.5.1.11</ecNumber>
    </recommendedName>
    <alternativeName>
        <fullName>Penicillin G amidase</fullName>
    </alternativeName>
    <alternativeName>
        <fullName>Penicillin G amidohydrolase</fullName>
    </alternativeName>
    <component>
        <recommendedName>
            <fullName>Penicillin G acylase subunit alpha</fullName>
        </recommendedName>
    </component>
    <component>
        <recommendedName>
            <fullName>Penicillin G acylase subunit beta</fullName>
        </recommendedName>
    </component>
</protein>
<name>PAC_RHIVS</name>
<dbReference type="EC" id="3.5.1.11"/>
<dbReference type="EMBL" id="L04471">
    <property type="protein sequence ID" value="AAA22077.1"/>
    <property type="molecule type" value="Genomic_DNA"/>
</dbReference>
<dbReference type="PIR" id="I39665">
    <property type="entry name" value="I39665"/>
</dbReference>
<dbReference type="SMR" id="P31956"/>
<dbReference type="MEROPS" id="S45.001"/>
<dbReference type="BRENDA" id="3.5.1.11">
    <property type="organism ID" value="461"/>
</dbReference>
<dbReference type="GO" id="GO:0005576">
    <property type="term" value="C:extracellular region"/>
    <property type="evidence" value="ECO:0007669"/>
    <property type="project" value="UniProtKB-SubCell"/>
</dbReference>
<dbReference type="GO" id="GO:0046872">
    <property type="term" value="F:metal ion binding"/>
    <property type="evidence" value="ECO:0007669"/>
    <property type="project" value="UniProtKB-KW"/>
</dbReference>
<dbReference type="GO" id="GO:0008953">
    <property type="term" value="F:penicillin amidase activity"/>
    <property type="evidence" value="ECO:0007669"/>
    <property type="project" value="UniProtKB-EC"/>
</dbReference>
<dbReference type="GO" id="GO:0017000">
    <property type="term" value="P:antibiotic biosynthetic process"/>
    <property type="evidence" value="ECO:0007669"/>
    <property type="project" value="InterPro"/>
</dbReference>
<dbReference type="GO" id="GO:0046677">
    <property type="term" value="P:response to antibiotic"/>
    <property type="evidence" value="ECO:0007669"/>
    <property type="project" value="UniProtKB-KW"/>
</dbReference>
<dbReference type="CDD" id="cd03748">
    <property type="entry name" value="Ntn_PGA"/>
    <property type="match status" value="1"/>
</dbReference>
<dbReference type="Gene3D" id="1.10.1400.10">
    <property type="match status" value="1"/>
</dbReference>
<dbReference type="Gene3D" id="1.10.287.150">
    <property type="match status" value="1"/>
</dbReference>
<dbReference type="Gene3D" id="2.30.120.10">
    <property type="match status" value="1"/>
</dbReference>
<dbReference type="Gene3D" id="3.60.20.10">
    <property type="entry name" value="Glutamine Phosphoribosylpyrophosphate, subunit 1, domain 1"/>
    <property type="match status" value="1"/>
</dbReference>
<dbReference type="Gene3D" id="1.10.439.10">
    <property type="entry name" value="Penicillin Amidohydrolase, domain 1"/>
    <property type="match status" value="1"/>
</dbReference>
<dbReference type="InterPro" id="IPR029055">
    <property type="entry name" value="Ntn_hydrolases_N"/>
</dbReference>
<dbReference type="InterPro" id="IPR014395">
    <property type="entry name" value="Pen/GL7ACA/AHL_acylase"/>
</dbReference>
<dbReference type="InterPro" id="IPR043147">
    <property type="entry name" value="Penicillin_amidase_A-knob"/>
</dbReference>
<dbReference type="InterPro" id="IPR023343">
    <property type="entry name" value="Penicillin_amidase_dom1"/>
</dbReference>
<dbReference type="InterPro" id="IPR043146">
    <property type="entry name" value="Penicillin_amidase_N_B-knob"/>
</dbReference>
<dbReference type="InterPro" id="IPR033813">
    <property type="entry name" value="PGA_C"/>
</dbReference>
<dbReference type="InterPro" id="IPR002692">
    <property type="entry name" value="S45"/>
</dbReference>
<dbReference type="PANTHER" id="PTHR34218:SF4">
    <property type="entry name" value="ACYL-HOMOSERINE LACTONE ACYLASE QUIP"/>
    <property type="match status" value="1"/>
</dbReference>
<dbReference type="PANTHER" id="PTHR34218">
    <property type="entry name" value="PEPTIDASE S45 PENICILLIN AMIDASE"/>
    <property type="match status" value="1"/>
</dbReference>
<dbReference type="Pfam" id="PF01804">
    <property type="entry name" value="Penicil_amidase"/>
    <property type="match status" value="1"/>
</dbReference>
<dbReference type="PIRSF" id="PIRSF001227">
    <property type="entry name" value="Pen_acylase"/>
    <property type="match status" value="1"/>
</dbReference>
<dbReference type="SUPFAM" id="SSF56235">
    <property type="entry name" value="N-terminal nucleophile aminohydrolases (Ntn hydrolases)"/>
    <property type="match status" value="1"/>
</dbReference>
<evidence type="ECO:0000250" key="1"/>
<evidence type="ECO:0000255" key="2"/>
<evidence type="ECO:0000269" key="3">
    <source>
    </source>
</evidence>
<evidence type="ECO:0000305" key="4"/>
<reference key="1">
    <citation type="journal article" date="1994" name="Gene">
        <title>The penicillin amidase of Arthrobacter viscosus (ATCC 15294).</title>
        <authorList>
            <person name="Konstantinovic M."/>
            <person name="Marjanovic N."/>
            <person name="Ljubijankic G."/>
            <person name="Glisin V."/>
        </authorList>
    </citation>
    <scope>NUCLEOTIDE SEQUENCE [GENOMIC DNA]</scope>
    <source>
        <strain>ATCC 15294 / DSM 20159 / IFO 13497 / LMG 16186 / NCIMB 10268</strain>
    </source>
</reference>
<reference key="2">
    <citation type="journal article" date="1988" name="Appl. Environ. Microbiol.">
        <title>Molecular cloning of the penicillin G acylase gene from Arthrobacter viscosus.</title>
        <authorList>
            <person name="Ohashi H."/>
            <person name="Katsuta Y."/>
            <person name="Hashizume T."/>
            <person name="Abe S.N."/>
            <person name="Kajiura H."/>
            <person name="Hattori H."/>
            <person name="Kamei T."/>
            <person name="Yano M."/>
        </authorList>
    </citation>
    <scope>PROTEIN SEQUENCE OF 27-67 AND 266-303</scope>
    <source>
        <strain>ATCC 15294 / DSM 20159 / IFO 13497 / LMG 16186 / NCIMB 10268</strain>
    </source>
</reference>